<name>BAMA_SALCH</name>
<keyword id="KW-0998">Cell outer membrane</keyword>
<keyword id="KW-0472">Membrane</keyword>
<keyword id="KW-0677">Repeat</keyword>
<keyword id="KW-0732">Signal</keyword>
<keyword id="KW-0812">Transmembrane</keyword>
<keyword id="KW-1134">Transmembrane beta strand</keyword>
<evidence type="ECO:0000255" key="1">
    <source>
        <dbReference type="HAMAP-Rule" id="MF_01430"/>
    </source>
</evidence>
<evidence type="ECO:0000255" key="2">
    <source>
        <dbReference type="PROSITE-ProRule" id="PRU01115"/>
    </source>
</evidence>
<accession>Q57T31</accession>
<sequence>MAMKKLLIASLLFSSATVYGAEGFVVKDIHFEGLQRVAVGAALLSMPVRTGDTVNDEDISNTIRALFATGNFEDVRVLRDGNTLLVQVKERPTIASITFSGNKSVKDDMLKQNLEASGVRVGESLDRTTLSDIEKGLEDFYYSVGKYSASVKAVVTPLPRNRVDLKLVFQEGVSAKIQQINIVGNHAFSTEELISHFQLRDEVPWWNVVGDRKYQKQKLAGDLETLRSYYLDRGYARFNIDSTQVSLTPDKKGIYITVNITEGDQYKLSGVQVSGNLAGHSAEIEKLTKIEPGELYNGTKVTKMEDDIKKLLGRYGYAYPRVQSQPEINDADKTVKLRVNVDAGNRFYVRKIRFEGNDTSKDSVLRREMRQMEGAWLGSDLVDQGKERLNRLGFFETVDTDTQRVPGSPDQVDVVYKVKERNTGSFNFGIGYGTESGVSFQAGVQQDNWLGTGYSVGINGTKNDYQTYSELSVTNPYFTVDGVSLGGRIFYNDFQADDADLSDYTNKSYGTDVTLGFPINEYNTLRAGLGYVHNKLSNMQPQIAMDRYLESMGQSADTSSFAADDFTFNYGWTYNKLDRGYFPTDGSRVNLTGKVTIPGSDNEYYKVSLDTATYVPIDNDHKWVVLGRTRWGYGDGLGGKEMPFYENFYAGGSSTVRGFQSNTIGPKAVYGYGAHTDPNDNNDDYEACTQSSGCKSDDAVGGNAMAVASLEFMTPTPFISEKYANSVRTSFFWDMGTVWDTNWDPSSAPSDVPDYSDPGNIRMSAGIALQWMSPLGPLVFSYAQPFKKYDGDKAEQFQFNIGKTW</sequence>
<organism>
    <name type="scientific">Salmonella choleraesuis (strain SC-B67)</name>
    <dbReference type="NCBI Taxonomy" id="321314"/>
    <lineage>
        <taxon>Bacteria</taxon>
        <taxon>Pseudomonadati</taxon>
        <taxon>Pseudomonadota</taxon>
        <taxon>Gammaproteobacteria</taxon>
        <taxon>Enterobacterales</taxon>
        <taxon>Enterobacteriaceae</taxon>
        <taxon>Salmonella</taxon>
    </lineage>
</organism>
<gene>
    <name evidence="1" type="primary">bamA</name>
    <name type="synonym">yaeT</name>
    <name type="ordered locus">SCH_0224</name>
</gene>
<comment type="function">
    <text evidence="1">Part of the outer membrane protein assembly complex, which is involved in assembly and insertion of beta-barrel proteins into the outer membrane. Constitutes, with BamD, the core component of the assembly machinery.</text>
</comment>
<comment type="subunit">
    <text evidence="1">Part of the Bam complex, which is composed of the outer membrane protein BamA, and four lipoproteins BamB, BamC, BamD and BamE.</text>
</comment>
<comment type="subcellular location">
    <subcellularLocation>
        <location evidence="1">Cell outer membrane</location>
    </subcellularLocation>
</comment>
<comment type="similarity">
    <text evidence="1">Belongs to the BamA family.</text>
</comment>
<protein>
    <recommendedName>
        <fullName evidence="1">Outer membrane protein assembly factor BamA</fullName>
    </recommendedName>
</protein>
<dbReference type="EMBL" id="AE017220">
    <property type="protein sequence ID" value="AAX64130.1"/>
    <property type="molecule type" value="Genomic_DNA"/>
</dbReference>
<dbReference type="RefSeq" id="WP_011264194.1">
    <property type="nucleotide sequence ID" value="NC_006905.1"/>
</dbReference>
<dbReference type="SMR" id="Q57T31"/>
<dbReference type="KEGG" id="sec:SCH_0224"/>
<dbReference type="HOGENOM" id="CLU_007664_1_0_6"/>
<dbReference type="Proteomes" id="UP000000538">
    <property type="component" value="Chromosome"/>
</dbReference>
<dbReference type="GO" id="GO:1990063">
    <property type="term" value="C:Bam protein complex"/>
    <property type="evidence" value="ECO:0007669"/>
    <property type="project" value="TreeGrafter"/>
</dbReference>
<dbReference type="GO" id="GO:0043165">
    <property type="term" value="P:Gram-negative-bacterium-type cell outer membrane assembly"/>
    <property type="evidence" value="ECO:0007669"/>
    <property type="project" value="UniProtKB-UniRule"/>
</dbReference>
<dbReference type="GO" id="GO:0051205">
    <property type="term" value="P:protein insertion into membrane"/>
    <property type="evidence" value="ECO:0007669"/>
    <property type="project" value="UniProtKB-UniRule"/>
</dbReference>
<dbReference type="FunFam" id="2.40.160.50:FF:000001">
    <property type="entry name" value="Outer membrane protein assembly factor BamA"/>
    <property type="match status" value="1"/>
</dbReference>
<dbReference type="FunFam" id="3.10.20.310:FF:000001">
    <property type="entry name" value="Outer membrane protein assembly factor BamA"/>
    <property type="match status" value="1"/>
</dbReference>
<dbReference type="FunFam" id="3.10.20.310:FF:000002">
    <property type="entry name" value="Outer membrane protein assembly factor BamA"/>
    <property type="match status" value="1"/>
</dbReference>
<dbReference type="FunFam" id="3.10.20.310:FF:000003">
    <property type="entry name" value="Outer membrane protein assembly factor BamA"/>
    <property type="match status" value="1"/>
</dbReference>
<dbReference type="FunFam" id="3.10.20.310:FF:000004">
    <property type="entry name" value="Outer membrane protein assembly factor BamA"/>
    <property type="match status" value="1"/>
</dbReference>
<dbReference type="FunFam" id="3.10.20.310:FF:000005">
    <property type="entry name" value="Outer membrane protein assembly factor BamA"/>
    <property type="match status" value="1"/>
</dbReference>
<dbReference type="Gene3D" id="3.10.20.310">
    <property type="entry name" value="membrane protein fhac"/>
    <property type="match status" value="5"/>
</dbReference>
<dbReference type="Gene3D" id="2.40.160.50">
    <property type="entry name" value="membrane protein fhac: a member of the omp85/tpsb transporter family"/>
    <property type="match status" value="1"/>
</dbReference>
<dbReference type="HAMAP" id="MF_01430">
    <property type="entry name" value="OM_assembly_BamA"/>
    <property type="match status" value="1"/>
</dbReference>
<dbReference type="InterPro" id="IPR000184">
    <property type="entry name" value="Bac_surfAg_D15"/>
</dbReference>
<dbReference type="InterPro" id="IPR010827">
    <property type="entry name" value="BamA/TamA_POTRA"/>
</dbReference>
<dbReference type="InterPro" id="IPR039910">
    <property type="entry name" value="D15-like"/>
</dbReference>
<dbReference type="InterPro" id="IPR023707">
    <property type="entry name" value="OM_assembly_BamA"/>
</dbReference>
<dbReference type="InterPro" id="IPR034746">
    <property type="entry name" value="POTRA"/>
</dbReference>
<dbReference type="NCBIfam" id="TIGR03303">
    <property type="entry name" value="OM_YaeT"/>
    <property type="match status" value="1"/>
</dbReference>
<dbReference type="NCBIfam" id="NF008287">
    <property type="entry name" value="PRK11067.1"/>
    <property type="match status" value="1"/>
</dbReference>
<dbReference type="PANTHER" id="PTHR12815:SF23">
    <property type="entry name" value="OUTER MEMBRANE PROTEIN ASSEMBLY FACTOR BAMA"/>
    <property type="match status" value="1"/>
</dbReference>
<dbReference type="PANTHER" id="PTHR12815">
    <property type="entry name" value="SORTING AND ASSEMBLY MACHINERY SAMM50 PROTEIN FAMILY MEMBER"/>
    <property type="match status" value="1"/>
</dbReference>
<dbReference type="Pfam" id="PF01103">
    <property type="entry name" value="Omp85"/>
    <property type="match status" value="1"/>
</dbReference>
<dbReference type="Pfam" id="PF07244">
    <property type="entry name" value="POTRA"/>
    <property type="match status" value="4"/>
</dbReference>
<dbReference type="PIRSF" id="PIRSF006076">
    <property type="entry name" value="OM_assembly_OMP85"/>
    <property type="match status" value="1"/>
</dbReference>
<dbReference type="PROSITE" id="PS51779">
    <property type="entry name" value="POTRA"/>
    <property type="match status" value="5"/>
</dbReference>
<proteinExistence type="inferred from homology"/>
<reference key="1">
    <citation type="journal article" date="2005" name="Nucleic Acids Res.">
        <title>The genome sequence of Salmonella enterica serovar Choleraesuis, a highly invasive and resistant zoonotic pathogen.</title>
        <authorList>
            <person name="Chiu C.-H."/>
            <person name="Tang P."/>
            <person name="Chu C."/>
            <person name="Hu S."/>
            <person name="Bao Q."/>
            <person name="Yu J."/>
            <person name="Chou Y.-Y."/>
            <person name="Wang H.-S."/>
            <person name="Lee Y.-S."/>
        </authorList>
    </citation>
    <scope>NUCLEOTIDE SEQUENCE [LARGE SCALE GENOMIC DNA]</scope>
    <source>
        <strain>SC-B67</strain>
    </source>
</reference>
<feature type="signal peptide" evidence="1">
    <location>
        <begin position="1"/>
        <end position="20"/>
    </location>
</feature>
<feature type="chain" id="PRO_0000045374" description="Outer membrane protein assembly factor BamA">
    <location>
        <begin position="21"/>
        <end position="805"/>
    </location>
</feature>
<feature type="domain" description="POTRA 1" evidence="2">
    <location>
        <begin position="24"/>
        <end position="91"/>
    </location>
</feature>
<feature type="domain" description="POTRA 2" evidence="2">
    <location>
        <begin position="92"/>
        <end position="172"/>
    </location>
</feature>
<feature type="domain" description="POTRA 3" evidence="2">
    <location>
        <begin position="175"/>
        <end position="263"/>
    </location>
</feature>
<feature type="domain" description="POTRA 4" evidence="2">
    <location>
        <begin position="266"/>
        <end position="344"/>
    </location>
</feature>
<feature type="domain" description="POTRA 5" evidence="2">
    <location>
        <begin position="347"/>
        <end position="421"/>
    </location>
</feature>